<comment type="function">
    <text evidence="1">Divisome component that associates with the complex late in its assembly, after the Z-ring is formed, and is dependent on DivIC and PBP2B for its recruitment to the divisome. Together with EzrA, is a key component of the system that regulates PBP1 localization during cell cycle progression. Its main role could be the removal of PBP1 from the cell pole after pole maturation is completed. Also contributes to the recruitment of PBP1 to the division complex. Not essential for septum formation.</text>
</comment>
<comment type="subunit">
    <text evidence="1">Forms polymers through the coiled coil domains. Interacts with PBP1, MreC and EzrA.</text>
</comment>
<comment type="subcellular location">
    <subcellularLocation>
        <location evidence="1">Cytoplasm</location>
    </subcellularLocation>
    <text evidence="1">Shuttles between the lateral wall and the division site in a cell cycle-dependent manner.</text>
</comment>
<comment type="similarity">
    <text evidence="1">Belongs to the GpsB family.</text>
</comment>
<gene>
    <name evidence="1" type="primary">gpsB</name>
    <name type="ordered locus">SGO_0589</name>
</gene>
<organism>
    <name type="scientific">Streptococcus gordonii (strain Challis / ATCC 35105 / BCRC 15272 / CH1 / DL1 / V288)</name>
    <dbReference type="NCBI Taxonomy" id="467705"/>
    <lineage>
        <taxon>Bacteria</taxon>
        <taxon>Bacillati</taxon>
        <taxon>Bacillota</taxon>
        <taxon>Bacilli</taxon>
        <taxon>Lactobacillales</taxon>
        <taxon>Streptococcaceae</taxon>
        <taxon>Streptococcus</taxon>
    </lineage>
</organism>
<dbReference type="EMBL" id="CP000725">
    <property type="protein sequence ID" value="ABV10093.1"/>
    <property type="molecule type" value="Genomic_DNA"/>
</dbReference>
<dbReference type="RefSeq" id="WP_012000085.1">
    <property type="nucleotide sequence ID" value="NC_009785.1"/>
</dbReference>
<dbReference type="SMR" id="A8AVU5"/>
<dbReference type="STRING" id="467705.SGO_0589"/>
<dbReference type="KEGG" id="sgo:SGO_0589"/>
<dbReference type="eggNOG" id="COG3599">
    <property type="taxonomic scope" value="Bacteria"/>
</dbReference>
<dbReference type="HOGENOM" id="CLU_140309_1_0_9"/>
<dbReference type="Proteomes" id="UP000001131">
    <property type="component" value="Chromosome"/>
</dbReference>
<dbReference type="GO" id="GO:0005737">
    <property type="term" value="C:cytoplasm"/>
    <property type="evidence" value="ECO:0007669"/>
    <property type="project" value="UniProtKB-SubCell"/>
</dbReference>
<dbReference type="GO" id="GO:0051301">
    <property type="term" value="P:cell division"/>
    <property type="evidence" value="ECO:0007669"/>
    <property type="project" value="UniProtKB-UniRule"/>
</dbReference>
<dbReference type="GO" id="GO:0008360">
    <property type="term" value="P:regulation of cell shape"/>
    <property type="evidence" value="ECO:0007669"/>
    <property type="project" value="UniProtKB-UniRule"/>
</dbReference>
<dbReference type="Gene3D" id="6.10.250.660">
    <property type="match status" value="1"/>
</dbReference>
<dbReference type="HAMAP" id="MF_02011">
    <property type="entry name" value="GpsB"/>
    <property type="match status" value="1"/>
</dbReference>
<dbReference type="InterPro" id="IPR011229">
    <property type="entry name" value="Cell_cycle_GpsB"/>
</dbReference>
<dbReference type="InterPro" id="IPR019933">
    <property type="entry name" value="DivIVA_domain"/>
</dbReference>
<dbReference type="InterPro" id="IPR007793">
    <property type="entry name" value="DivIVA_fam"/>
</dbReference>
<dbReference type="NCBIfam" id="TIGR03544">
    <property type="entry name" value="DivI1A_domain"/>
    <property type="match status" value="1"/>
</dbReference>
<dbReference type="NCBIfam" id="NF010725">
    <property type="entry name" value="PRK14127.1"/>
    <property type="match status" value="1"/>
</dbReference>
<dbReference type="PANTHER" id="PTHR35794:SF1">
    <property type="entry name" value="CELL CYCLE PROTEIN GPSB"/>
    <property type="match status" value="1"/>
</dbReference>
<dbReference type="PANTHER" id="PTHR35794">
    <property type="entry name" value="CELL DIVISION PROTEIN DIVIVA"/>
    <property type="match status" value="1"/>
</dbReference>
<dbReference type="Pfam" id="PF05103">
    <property type="entry name" value="DivIVA"/>
    <property type="match status" value="1"/>
</dbReference>
<dbReference type="PIRSF" id="PIRSF029938">
    <property type="entry name" value="UCP029938"/>
    <property type="match status" value="1"/>
</dbReference>
<accession>A8AVU5</accession>
<reference key="1">
    <citation type="journal article" date="2007" name="J. Bacteriol.">
        <title>Genome-wide transcriptional changes in Streptococcus gordonii in response to competence signaling peptide.</title>
        <authorList>
            <person name="Vickerman M.M."/>
            <person name="Iobst S."/>
            <person name="Jesionowski A.M."/>
            <person name="Gill S.R."/>
        </authorList>
    </citation>
    <scope>NUCLEOTIDE SEQUENCE [LARGE SCALE GENOMIC DNA]</scope>
    <source>
        <strain>Challis / ATCC 35105 / BCRC 15272 / CH1 / DL1 / V288</strain>
    </source>
</reference>
<feature type="chain" id="PRO_0000337951" description="Cell cycle protein GpsB">
    <location>
        <begin position="1"/>
        <end position="116"/>
    </location>
</feature>
<feature type="region of interest" description="Disordered" evidence="2">
    <location>
        <begin position="57"/>
        <end position="78"/>
    </location>
</feature>
<feature type="coiled-coil region" evidence="1">
    <location>
        <begin position="32"/>
        <end position="69"/>
    </location>
</feature>
<feature type="compositionally biased region" description="Polar residues" evidence="2">
    <location>
        <begin position="67"/>
        <end position="78"/>
    </location>
</feature>
<keyword id="KW-0131">Cell cycle</keyword>
<keyword id="KW-0132">Cell division</keyword>
<keyword id="KW-0133">Cell shape</keyword>
<keyword id="KW-0175">Coiled coil</keyword>
<keyword id="KW-0963">Cytoplasm</keyword>
<keyword id="KW-1185">Reference proteome</keyword>
<proteinExistence type="inferred from homology"/>
<sequence>MASIIFTPKDIFDQDFKTAVRGYSKQEVDEFLDDVIKDYETYSALVKELREENSRLKQELSKRMQEAPNSTASQVHQSFGDTTQTTITNFDILKRLSRLEKEVFGKQIQASELNQL</sequence>
<evidence type="ECO:0000255" key="1">
    <source>
        <dbReference type="HAMAP-Rule" id="MF_02011"/>
    </source>
</evidence>
<evidence type="ECO:0000256" key="2">
    <source>
        <dbReference type="SAM" id="MobiDB-lite"/>
    </source>
</evidence>
<name>GPSB_STRGC</name>
<protein>
    <recommendedName>
        <fullName evidence="1">Cell cycle protein GpsB</fullName>
    </recommendedName>
    <alternativeName>
        <fullName evidence="1">Guiding PBP1-shuttling protein</fullName>
    </alternativeName>
</protein>